<protein>
    <recommendedName>
        <fullName evidence="1">Cell division topological specificity factor</fullName>
    </recommendedName>
</protein>
<name>MINE_NOSS1</name>
<sequence length="97" mass="11266">MILELLDKLFLRTPDTSRSHVKRRLQLVIAHDRAGLDPETLEKMRKEILDIVCRYVEVEPDGLEFALESNQRTTALIANLPIRRVKPELPIFDETSQ</sequence>
<organism>
    <name type="scientific">Nostoc sp. (strain PCC 7120 / SAG 25.82 / UTEX 2576)</name>
    <dbReference type="NCBI Taxonomy" id="103690"/>
    <lineage>
        <taxon>Bacteria</taxon>
        <taxon>Bacillati</taxon>
        <taxon>Cyanobacteriota</taxon>
        <taxon>Cyanophyceae</taxon>
        <taxon>Nostocales</taxon>
        <taxon>Nostocaceae</taxon>
        <taxon>Nostoc</taxon>
    </lineage>
</organism>
<feature type="chain" id="PRO_0000298069" description="Cell division topological specificity factor">
    <location>
        <begin position="1"/>
        <end position="97"/>
    </location>
</feature>
<dbReference type="EMBL" id="BA000019">
    <property type="protein sequence ID" value="BAB75156.1"/>
    <property type="molecule type" value="Genomic_DNA"/>
</dbReference>
<dbReference type="PIR" id="AB2238">
    <property type="entry name" value="AB2238"/>
</dbReference>
<dbReference type="RefSeq" id="WP_010997607.1">
    <property type="nucleotide sequence ID" value="NZ_RSCN01000015.1"/>
</dbReference>
<dbReference type="SMR" id="Q8YRI9"/>
<dbReference type="STRING" id="103690.gene:10495496"/>
<dbReference type="KEGG" id="ana:asr3457"/>
<dbReference type="eggNOG" id="COG0851">
    <property type="taxonomic scope" value="Bacteria"/>
</dbReference>
<dbReference type="OrthoDB" id="9796578at2"/>
<dbReference type="Proteomes" id="UP000002483">
    <property type="component" value="Chromosome"/>
</dbReference>
<dbReference type="GO" id="GO:0051301">
    <property type="term" value="P:cell division"/>
    <property type="evidence" value="ECO:0007669"/>
    <property type="project" value="UniProtKB-KW"/>
</dbReference>
<dbReference type="GO" id="GO:0032955">
    <property type="term" value="P:regulation of division septum assembly"/>
    <property type="evidence" value="ECO:0007669"/>
    <property type="project" value="InterPro"/>
</dbReference>
<dbReference type="Gene3D" id="3.30.1070.10">
    <property type="entry name" value="Cell division topological specificity factor MinE"/>
    <property type="match status" value="1"/>
</dbReference>
<dbReference type="HAMAP" id="MF_00262">
    <property type="entry name" value="MinE"/>
    <property type="match status" value="1"/>
</dbReference>
<dbReference type="InterPro" id="IPR005527">
    <property type="entry name" value="MinE"/>
</dbReference>
<dbReference type="InterPro" id="IPR036707">
    <property type="entry name" value="MinE_sf"/>
</dbReference>
<dbReference type="NCBIfam" id="TIGR01215">
    <property type="entry name" value="minE"/>
    <property type="match status" value="1"/>
</dbReference>
<dbReference type="Pfam" id="PF03776">
    <property type="entry name" value="MinE"/>
    <property type="match status" value="1"/>
</dbReference>
<dbReference type="SUPFAM" id="SSF55229">
    <property type="entry name" value="Cell division protein MinE topological specificity domain"/>
    <property type="match status" value="1"/>
</dbReference>
<comment type="function">
    <text evidence="1">Prevents the cell division inhibition by proteins MinC and MinD at internal division sites while permitting inhibition at polar sites. This ensures cell division at the proper site by restricting the formation of a division septum at the midpoint of the long axis of the cell.</text>
</comment>
<comment type="similarity">
    <text evidence="1">Belongs to the MinE family.</text>
</comment>
<accession>Q8YRI9</accession>
<gene>
    <name evidence="1" type="primary">minE</name>
    <name type="ordered locus">asr3457</name>
</gene>
<proteinExistence type="inferred from homology"/>
<reference key="1">
    <citation type="journal article" date="2001" name="DNA Res.">
        <title>Complete genomic sequence of the filamentous nitrogen-fixing cyanobacterium Anabaena sp. strain PCC 7120.</title>
        <authorList>
            <person name="Kaneko T."/>
            <person name="Nakamura Y."/>
            <person name="Wolk C.P."/>
            <person name="Kuritz T."/>
            <person name="Sasamoto S."/>
            <person name="Watanabe A."/>
            <person name="Iriguchi M."/>
            <person name="Ishikawa A."/>
            <person name="Kawashima K."/>
            <person name="Kimura T."/>
            <person name="Kishida Y."/>
            <person name="Kohara M."/>
            <person name="Matsumoto M."/>
            <person name="Matsuno A."/>
            <person name="Muraki A."/>
            <person name="Nakazaki N."/>
            <person name="Shimpo S."/>
            <person name="Sugimoto M."/>
            <person name="Takazawa M."/>
            <person name="Yamada M."/>
            <person name="Yasuda M."/>
            <person name="Tabata S."/>
        </authorList>
    </citation>
    <scope>NUCLEOTIDE SEQUENCE [LARGE SCALE GENOMIC DNA]</scope>
    <source>
        <strain>PCC 7120 / SAG 25.82 / UTEX 2576</strain>
    </source>
</reference>
<evidence type="ECO:0000255" key="1">
    <source>
        <dbReference type="HAMAP-Rule" id="MF_00262"/>
    </source>
</evidence>
<keyword id="KW-0131">Cell cycle</keyword>
<keyword id="KW-0132">Cell division</keyword>
<keyword id="KW-1185">Reference proteome</keyword>